<organism>
    <name type="scientific">Bombyx mori</name>
    <name type="common">Silk moth</name>
    <dbReference type="NCBI Taxonomy" id="7091"/>
    <lineage>
        <taxon>Eukaryota</taxon>
        <taxon>Metazoa</taxon>
        <taxon>Ecdysozoa</taxon>
        <taxon>Arthropoda</taxon>
        <taxon>Hexapoda</taxon>
        <taxon>Insecta</taxon>
        <taxon>Pterygota</taxon>
        <taxon>Neoptera</taxon>
        <taxon>Endopterygota</taxon>
        <taxon>Lepidoptera</taxon>
        <taxon>Glossata</taxon>
        <taxon>Ditrysia</taxon>
        <taxon>Bombycoidea</taxon>
        <taxon>Bombycidae</taxon>
        <taxon>Bombycinae</taxon>
        <taxon>Bombyx</taxon>
    </lineage>
</organism>
<keyword id="KW-0002">3D-structure</keyword>
<keyword id="KW-0165">Cleavage on pair of basic residues</keyword>
<keyword id="KW-0903">Direct protein sequencing</keyword>
<keyword id="KW-1015">Disulfide bond</keyword>
<keyword id="KW-0325">Glycoprotein</keyword>
<keyword id="KW-0372">Hormone</keyword>
<keyword id="KW-0527">Neuropeptide</keyword>
<keyword id="KW-1185">Reference proteome</keyword>
<keyword id="KW-0732">Signal</keyword>
<proteinExistence type="evidence at protein level"/>
<name>PTTH_BOMMO</name>
<feature type="signal peptide">
    <location>
        <begin position="1"/>
        <end position="29"/>
    </location>
</feature>
<feature type="peptide" id="PRO_0000022188" description="P2K">
    <location>
        <begin position="33"/>
        <end position="53"/>
    </location>
</feature>
<feature type="peptide" id="PRO_0000022189" description="P6K">
    <location>
        <begin position="56"/>
        <end position="112"/>
    </location>
</feature>
<feature type="chain" id="PRO_0000022190" description="Prothoracicotropic hormone">
    <location>
        <begin position="116"/>
        <end position="224"/>
    </location>
</feature>
<feature type="glycosylation site" description="N-linked (GlcNAc...) asparagine" evidence="1">
    <location>
        <position position="156"/>
    </location>
</feature>
<feature type="disulfide bond" description="Interchain" evidence="2">
    <location>
        <position position="130"/>
    </location>
</feature>
<feature type="disulfide bond" evidence="2">
    <location>
        <begin position="132"/>
        <end position="169"/>
    </location>
</feature>
<feature type="disulfide bond" evidence="2">
    <location>
        <begin position="155"/>
        <end position="211"/>
    </location>
</feature>
<feature type="disulfide bond" evidence="2">
    <location>
        <begin position="163"/>
        <end position="213"/>
    </location>
</feature>
<feature type="strand" evidence="3">
    <location>
        <begin position="135"/>
        <end position="139"/>
    </location>
</feature>
<feature type="strand" evidence="3">
    <location>
        <begin position="145"/>
        <end position="147"/>
    </location>
</feature>
<feature type="strand" evidence="3">
    <location>
        <begin position="149"/>
        <end position="154"/>
    </location>
</feature>
<feature type="strand" evidence="3">
    <location>
        <begin position="170"/>
        <end position="181"/>
    </location>
</feature>
<feature type="strand" evidence="3">
    <location>
        <begin position="194"/>
        <end position="196"/>
    </location>
</feature>
<feature type="strand" evidence="3">
    <location>
        <begin position="198"/>
        <end position="212"/>
    </location>
</feature>
<dbReference type="EMBL" id="D90082">
    <property type="protein sequence ID" value="BAA14119.1"/>
    <property type="molecule type" value="mRNA"/>
</dbReference>
<dbReference type="EMBL" id="D90083">
    <property type="protein sequence ID" value="BAA14120.1"/>
    <property type="molecule type" value="mRNA"/>
</dbReference>
<dbReference type="EMBL" id="X75942">
    <property type="protein sequence ID" value="CAA53543.1"/>
    <property type="molecule type" value="Genomic_DNA"/>
</dbReference>
<dbReference type="PIR" id="S40125">
    <property type="entry name" value="A40099"/>
</dbReference>
<dbReference type="RefSeq" id="NP_001037349.1">
    <property type="nucleotide sequence ID" value="NM_001043884.1"/>
</dbReference>
<dbReference type="PDB" id="5AOQ">
    <property type="method" value="X-ray"/>
    <property type="resolution" value="2.70 A"/>
    <property type="chains" value="L/M=119-224"/>
</dbReference>
<dbReference type="PDBsum" id="5AOQ"/>
<dbReference type="SMR" id="P17219"/>
<dbReference type="STRING" id="7091.P17219"/>
<dbReference type="iPTMnet" id="P17219"/>
<dbReference type="PaxDb" id="7091-BGIBMGA000357-TA"/>
<dbReference type="EnsemblMetazoa" id="NM_001043884.1">
    <property type="protein sequence ID" value="NP_001037349.1"/>
    <property type="gene ID" value="GeneID_692767"/>
</dbReference>
<dbReference type="GeneID" id="692767"/>
<dbReference type="KEGG" id="bmor:692767"/>
<dbReference type="CTD" id="33238"/>
<dbReference type="eggNOG" id="ENOG502TDG8">
    <property type="taxonomic scope" value="Eukaryota"/>
</dbReference>
<dbReference type="HOGENOM" id="CLU_1397733_0_0_1"/>
<dbReference type="InParanoid" id="P17219"/>
<dbReference type="OrthoDB" id="524969at7088"/>
<dbReference type="EvolutionaryTrace" id="P17219"/>
<dbReference type="Proteomes" id="UP000005204">
    <property type="component" value="Unassembled WGS sequence"/>
</dbReference>
<dbReference type="GO" id="GO:0005179">
    <property type="term" value="F:hormone activity"/>
    <property type="evidence" value="ECO:0007669"/>
    <property type="project" value="UniProtKB-KW"/>
</dbReference>
<dbReference type="GO" id="GO:0007218">
    <property type="term" value="P:neuropeptide signaling pathway"/>
    <property type="evidence" value="ECO:0007669"/>
    <property type="project" value="UniProtKB-KW"/>
</dbReference>
<dbReference type="Gene3D" id="2.10.90.10">
    <property type="entry name" value="Cystine-knot cytokines"/>
    <property type="match status" value="1"/>
</dbReference>
<dbReference type="InterPro" id="IPR029034">
    <property type="entry name" value="Cystine-knot_cytokine"/>
</dbReference>
<dbReference type="InterPro" id="IPR052876">
    <property type="entry name" value="Insect_Hormone_Regulators"/>
</dbReference>
<dbReference type="PANTHER" id="PTHR39940">
    <property type="entry name" value="PROTHORACICOTROPIC HORMONE, ISOFORM F"/>
    <property type="match status" value="1"/>
</dbReference>
<dbReference type="PANTHER" id="PTHR39940:SF1">
    <property type="entry name" value="PROTHORACICOTROPIC HORMONE, ISOFORM F"/>
    <property type="match status" value="1"/>
</dbReference>
<dbReference type="SUPFAM" id="SSF57501">
    <property type="entry name" value="Cystine-knot cytokines"/>
    <property type="match status" value="1"/>
</dbReference>
<comment type="function">
    <text>PTTH is a brain secretory polypeptide of insects which stimulates the prothoracic glands to produce and release ecdysone, the steroid essential to insect development.</text>
</comment>
<comment type="function">
    <text>Peptides P2K and P6K are presumed to be cleaved post-translationally and may play some unknown physiologically or developmentally important functions.</text>
</comment>
<comment type="subunit">
    <text evidence="2">Homodimer; disulfide-linked.</text>
</comment>
<comment type="tissue specificity">
    <text>PTTH is synthesized by two dorsolateral neurosecretory cells of the Bombyx brain.</text>
</comment>
<evidence type="ECO:0000269" key="1">
    <source>
    </source>
</evidence>
<evidence type="ECO:0000269" key="2">
    <source>
    </source>
</evidence>
<evidence type="ECO:0007829" key="3">
    <source>
        <dbReference type="PDB" id="5AOQ"/>
    </source>
</evidence>
<sequence length="224" mass="26028">MITRPIILVILCYAILMIVQSFVPKAVALKRKPDVGGFMVEDQRTHKSHNYMMKRARNDVLGDKENVRPNPYYTEPFDPDTSPEELSALIVDYANMIRNDVILLDNSVETRTRKRGNIQVENQAIPDPPCTCKYKKEIEDLGENSVPRFIETRNCNKTQQPTCRPPYICKESLYSITILKRRETKSQESLEIPNELKYRWVAESHPVSVACLCTRDYQLRYNNN</sequence>
<reference key="1">
    <citation type="journal article" date="1990" name="Science">
        <title>Molecular cloning of the Bombyx mori prothoracicotropic hormone.</title>
        <authorList>
            <person name="Kawakami A."/>
            <person name="Kataoka H."/>
            <person name="Oka T."/>
            <person name="Mizoguchi A."/>
            <person name="Kimura-Kawakami M."/>
            <person name="Adachi T."/>
            <person name="Iwami M."/>
            <person name="Nagasawa H."/>
            <person name="Suzuki A."/>
            <person name="Ishizaki H."/>
        </authorList>
    </citation>
    <scope>NUCLEOTIDE SEQUENCE [MRNA]</scope>
</reference>
<reference key="2">
    <citation type="journal article" date="1994" name="Eur. J. Biochem.">
        <title>Structure and expression of the gene for the prothoracicotropic hormone of the silkmoth Bombyx mori.</title>
        <authorList>
            <person name="Adachi-Yamada T."/>
            <person name="Iwami M."/>
            <person name="Kataoka H."/>
            <person name="Suzuki A."/>
            <person name="Ishizaki H."/>
        </authorList>
    </citation>
    <scope>NUCLEOTIDE SEQUENCE [GENOMIC DNA]</scope>
    <source>
        <strain>Kinshu X Showa</strain>
        <tissue>Posterior silk gland</tissue>
    </source>
</reference>
<reference key="3">
    <citation type="journal article" date="1991" name="Agric. Biol. Chem.">
        <title>Prothoracicotropic hormone of the silkworm, Bombyx mori: amino acid sequence and dimeric structure.</title>
        <authorList>
            <person name="Kataoka H."/>
            <person name="Nagasawa H."/>
            <person name="Isogai A."/>
            <person name="Ishizaki H."/>
            <person name="Suzuki A."/>
        </authorList>
    </citation>
    <scope>PARTIAL PROTEIN SEQUENCE</scope>
    <scope>GLYCOSYLATION AT ASN-156</scope>
</reference>
<reference key="4">
    <citation type="journal article" date="1994" name="Biochemistry">
        <title>Assignment of disulfide bond location in prothoracicotropic hormone of the silkworm, Bombyx mori: a homodimeric peptide.</title>
        <authorList>
            <person name="Ishibashi J."/>
            <person name="Kataoka H."/>
            <person name="Isogai A."/>
            <person name="Kawakami A."/>
            <person name="Saegusa H."/>
            <person name="Yagi Y."/>
            <person name="Mizoguchi A."/>
            <person name="Ishizaki H."/>
            <person name="Suzuki A."/>
        </authorList>
    </citation>
    <scope>DISULFIDE BONDS</scope>
</reference>
<protein>
    <recommendedName>
        <fullName>Prothoracicotropic hormone</fullName>
        <shortName>PTTH</shortName>
    </recommendedName>
    <component>
        <recommendedName>
            <fullName>P2K</fullName>
        </recommendedName>
    </component>
    <component>
        <recommendedName>
            <fullName>P6K</fullName>
        </recommendedName>
    </component>
    <component>
        <recommendedName>
            <fullName>Prothoracicotropic hormone</fullName>
        </recommendedName>
    </component>
</protein>
<accession>P17219</accession>